<protein>
    <recommendedName>
        <fullName evidence="1">3-keto-L-gulonate-6-phosphate decarboxylase UlaD</fullName>
        <ecNumber evidence="1">4.1.1.85</ecNumber>
    </recommendedName>
    <alternativeName>
        <fullName evidence="1">3-dehydro-L-gulonate-6-phosphate decarboxylase</fullName>
    </alternativeName>
    <alternativeName>
        <fullName evidence="1">KGPDC</fullName>
    </alternativeName>
    <alternativeName>
        <fullName evidence="1">L-ascorbate utilization protein D</fullName>
    </alternativeName>
</protein>
<sequence>MSLPMLQVALDNQTMDSAYETTRLIAEEVDIIEVGTILCVGEGVRAVRDLKALYPHKIVLADAKIADAGKILSRMCFEANADWVTVICCADINTAKGALDVAKEFNGDVQIELTGYWTWEQAQQWRDAGIQQVVYHRSRDAQAAGVAWGEADITAIKRLSDMGFKVTVTGGLALEDLPLFKGIPIHVFIAGRSIRDAESPVEAARQFKRSIAQLWG</sequence>
<accession>B5R9E3</accession>
<dbReference type="EC" id="4.1.1.85" evidence="1"/>
<dbReference type="EMBL" id="AM933173">
    <property type="protein sequence ID" value="CAR39991.1"/>
    <property type="molecule type" value="Genomic_DNA"/>
</dbReference>
<dbReference type="RefSeq" id="WP_000056761.1">
    <property type="nucleotide sequence ID" value="NC_011274.1"/>
</dbReference>
<dbReference type="SMR" id="B5R9E3"/>
<dbReference type="KEGG" id="seg:SG4228"/>
<dbReference type="HOGENOM" id="CLU_081825_0_0_6"/>
<dbReference type="UniPathway" id="UPA00263">
    <property type="reaction ID" value="UER00378"/>
</dbReference>
<dbReference type="Proteomes" id="UP000008321">
    <property type="component" value="Chromosome"/>
</dbReference>
<dbReference type="GO" id="GO:0033982">
    <property type="term" value="F:3-dehydro-L-gulonate-6-phosphate decarboxylase activity"/>
    <property type="evidence" value="ECO:0007669"/>
    <property type="project" value="UniProtKB-EC"/>
</dbReference>
<dbReference type="GO" id="GO:0000287">
    <property type="term" value="F:magnesium ion binding"/>
    <property type="evidence" value="ECO:0007669"/>
    <property type="project" value="UniProtKB-UniRule"/>
</dbReference>
<dbReference type="GO" id="GO:0004590">
    <property type="term" value="F:orotidine-5'-phosphate decarboxylase activity"/>
    <property type="evidence" value="ECO:0007669"/>
    <property type="project" value="InterPro"/>
</dbReference>
<dbReference type="GO" id="GO:0006207">
    <property type="term" value="P:'de novo' pyrimidine nucleobase biosynthetic process"/>
    <property type="evidence" value="ECO:0007669"/>
    <property type="project" value="InterPro"/>
</dbReference>
<dbReference type="GO" id="GO:0019854">
    <property type="term" value="P:L-ascorbic acid catabolic process"/>
    <property type="evidence" value="ECO:0007669"/>
    <property type="project" value="UniProtKB-UniRule"/>
</dbReference>
<dbReference type="CDD" id="cd04726">
    <property type="entry name" value="KGPDC_HPS"/>
    <property type="match status" value="1"/>
</dbReference>
<dbReference type="FunFam" id="3.20.20.70:FF:000022">
    <property type="entry name" value="3-keto-L-gulonate-6-phosphate decarboxylase UlaD"/>
    <property type="match status" value="1"/>
</dbReference>
<dbReference type="Gene3D" id="3.20.20.70">
    <property type="entry name" value="Aldolase class I"/>
    <property type="match status" value="1"/>
</dbReference>
<dbReference type="HAMAP" id="MF_01267">
    <property type="entry name" value="UlaD"/>
    <property type="match status" value="1"/>
</dbReference>
<dbReference type="InterPro" id="IPR023942">
    <property type="entry name" value="3-keto-L-gulonate6Pdecase_UlaD"/>
</dbReference>
<dbReference type="InterPro" id="IPR013785">
    <property type="entry name" value="Aldolase_TIM"/>
</dbReference>
<dbReference type="InterPro" id="IPR041710">
    <property type="entry name" value="HPS/KGPDC"/>
</dbReference>
<dbReference type="InterPro" id="IPR001754">
    <property type="entry name" value="OMPdeCOase_dom"/>
</dbReference>
<dbReference type="InterPro" id="IPR011060">
    <property type="entry name" value="RibuloseP-bd_barrel"/>
</dbReference>
<dbReference type="NCBIfam" id="NF009832">
    <property type="entry name" value="PRK13306.1"/>
    <property type="match status" value="1"/>
</dbReference>
<dbReference type="PANTHER" id="PTHR35039">
    <property type="entry name" value="3-KETO-L-GULONATE-6-PHOSPHATE DECARBOXYLASE SGBH-RELATED"/>
    <property type="match status" value="1"/>
</dbReference>
<dbReference type="PANTHER" id="PTHR35039:SF3">
    <property type="entry name" value="3-KETO-L-GULONATE-6-PHOSPHATE DECARBOXYLASE SGBH-RELATED"/>
    <property type="match status" value="1"/>
</dbReference>
<dbReference type="Pfam" id="PF00215">
    <property type="entry name" value="OMPdecase"/>
    <property type="match status" value="1"/>
</dbReference>
<dbReference type="SMART" id="SM00934">
    <property type="entry name" value="OMPdecase"/>
    <property type="match status" value="1"/>
</dbReference>
<dbReference type="SUPFAM" id="SSF51366">
    <property type="entry name" value="Ribulose-phoshate binding barrel"/>
    <property type="match status" value="1"/>
</dbReference>
<feature type="chain" id="PRO_1000140121" description="3-keto-L-gulonate-6-phosphate decarboxylase UlaD">
    <location>
        <begin position="1"/>
        <end position="216"/>
    </location>
</feature>
<feature type="binding site" evidence="1">
    <location>
        <position position="11"/>
    </location>
    <ligand>
        <name>substrate</name>
    </ligand>
</feature>
<feature type="binding site" evidence="1">
    <location>
        <position position="33"/>
    </location>
    <ligand>
        <name>Mg(2+)</name>
        <dbReference type="ChEBI" id="CHEBI:18420"/>
    </ligand>
</feature>
<feature type="binding site" evidence="1">
    <location>
        <position position="62"/>
    </location>
    <ligand>
        <name>Mg(2+)</name>
        <dbReference type="ChEBI" id="CHEBI:18420"/>
    </ligand>
</feature>
<feature type="binding site" evidence="1">
    <location>
        <position position="192"/>
    </location>
    <ligand>
        <name>substrate</name>
    </ligand>
</feature>
<feature type="site" description="Transition state stabilizer" evidence="1">
    <location>
        <position position="64"/>
    </location>
</feature>
<feature type="site" description="Transition state stabilizer" evidence="1">
    <location>
        <position position="67"/>
    </location>
</feature>
<name>ULAD_SALG2</name>
<gene>
    <name evidence="1" type="primary">ulaD</name>
    <name type="ordered locus">SG4228</name>
</gene>
<proteinExistence type="inferred from homology"/>
<evidence type="ECO:0000255" key="1">
    <source>
        <dbReference type="HAMAP-Rule" id="MF_01267"/>
    </source>
</evidence>
<organism>
    <name type="scientific">Salmonella gallinarum (strain 287/91 / NCTC 13346)</name>
    <dbReference type="NCBI Taxonomy" id="550538"/>
    <lineage>
        <taxon>Bacteria</taxon>
        <taxon>Pseudomonadati</taxon>
        <taxon>Pseudomonadota</taxon>
        <taxon>Gammaproteobacteria</taxon>
        <taxon>Enterobacterales</taxon>
        <taxon>Enterobacteriaceae</taxon>
        <taxon>Salmonella</taxon>
    </lineage>
</organism>
<keyword id="KW-0119">Carbohydrate metabolism</keyword>
<keyword id="KW-0210">Decarboxylase</keyword>
<keyword id="KW-0456">Lyase</keyword>
<keyword id="KW-0460">Magnesium</keyword>
<keyword id="KW-0479">Metal-binding</keyword>
<comment type="function">
    <text evidence="1">Catalyzes the decarboxylation of 3-keto-L-gulonate-6-P into L-xylulose-5-P. Is involved in the anaerobic L-ascorbate utilization.</text>
</comment>
<comment type="catalytic activity">
    <reaction evidence="1">
        <text>3-dehydro-L-gulonate 6-phosphate + H(+) = L-xylulose 5-phosphate + CO2</text>
        <dbReference type="Rhea" id="RHEA:14353"/>
        <dbReference type="ChEBI" id="CHEBI:15378"/>
        <dbReference type="ChEBI" id="CHEBI:16526"/>
        <dbReference type="ChEBI" id="CHEBI:57829"/>
        <dbReference type="ChEBI" id="CHEBI:58774"/>
        <dbReference type="EC" id="4.1.1.85"/>
    </reaction>
</comment>
<comment type="cofactor">
    <cofactor evidence="1">
        <name>Mg(2+)</name>
        <dbReference type="ChEBI" id="CHEBI:18420"/>
    </cofactor>
    <text evidence="1">Binds 1 Mg(2+) ion per subunit.</text>
</comment>
<comment type="pathway">
    <text evidence="1">Cofactor degradation; L-ascorbate degradation; D-xylulose 5-phosphate from L-ascorbate: step 2/4.</text>
</comment>
<comment type="subunit">
    <text evidence="1">Homodimer.</text>
</comment>
<comment type="induction">
    <text evidence="1">Induced by L-ascorbate. Repressed by UlaR.</text>
</comment>
<comment type="similarity">
    <text evidence="1">Belongs to the HPS/KGPDC family. KGPDC subfamily.</text>
</comment>
<reference key="1">
    <citation type="journal article" date="2008" name="Genome Res.">
        <title>Comparative genome analysis of Salmonella enteritidis PT4 and Salmonella gallinarum 287/91 provides insights into evolutionary and host adaptation pathways.</title>
        <authorList>
            <person name="Thomson N.R."/>
            <person name="Clayton D.J."/>
            <person name="Windhorst D."/>
            <person name="Vernikos G."/>
            <person name="Davidson S."/>
            <person name="Churcher C."/>
            <person name="Quail M.A."/>
            <person name="Stevens M."/>
            <person name="Jones M.A."/>
            <person name="Watson M."/>
            <person name="Barron A."/>
            <person name="Layton A."/>
            <person name="Pickard D."/>
            <person name="Kingsley R.A."/>
            <person name="Bignell A."/>
            <person name="Clark L."/>
            <person name="Harris B."/>
            <person name="Ormond D."/>
            <person name="Abdellah Z."/>
            <person name="Brooks K."/>
            <person name="Cherevach I."/>
            <person name="Chillingworth T."/>
            <person name="Woodward J."/>
            <person name="Norberczak H."/>
            <person name="Lord A."/>
            <person name="Arrowsmith C."/>
            <person name="Jagels K."/>
            <person name="Moule S."/>
            <person name="Mungall K."/>
            <person name="Saunders M."/>
            <person name="Whitehead S."/>
            <person name="Chabalgoity J.A."/>
            <person name="Maskell D."/>
            <person name="Humphreys T."/>
            <person name="Roberts M."/>
            <person name="Barrow P.A."/>
            <person name="Dougan G."/>
            <person name="Parkhill J."/>
        </authorList>
    </citation>
    <scope>NUCLEOTIDE SEQUENCE [LARGE SCALE GENOMIC DNA]</scope>
    <source>
        <strain>287/91 / NCTC 13346</strain>
    </source>
</reference>